<name>YOPQ_YEREN</name>
<gene>
    <name type="primary">yopQ</name>
    <name type="synonym">yop20</name>
</gene>
<evidence type="ECO:0000255" key="1"/>
<evidence type="ECO:0000305" key="2"/>
<protein>
    <recommendedName>
        <fullName>Protein YopQ</fullName>
    </recommendedName>
</protein>
<comment type="function">
    <text>May function as a virulence determinant.</text>
</comment>
<comment type="subcellular location">
    <subcellularLocation>
        <location evidence="2">Secreted</location>
    </subcellularLocation>
</comment>
<sequence>MFIKDAYNMRALCTALEQSAPDTIINTSKEENNSYYCATAHLLRTDVCSLVNRVGIEPLKSGSILSTLEELWQAVGIIYRLYEWQHVSDIDTNFKKLPNNSDFGLVFSVLDCDIGYVITGKKDSKGNIELYDPKNSLLIENDDIKKYLYDENFHRFCIMLIISKSELEELSRESCDQKCIMG</sequence>
<accession>P27474</accession>
<geneLocation type="plasmid">
    <name>pYV</name>
</geneLocation>
<proteinExistence type="evidence at protein level"/>
<reference key="1">
    <citation type="journal article" date="1990" name="Infect. Immun.">
        <title>Secretion of Yop proteins by Yersiniae.</title>
        <authorList>
            <person name="Michiels T."/>
            <person name="Wattiau P."/>
            <person name="Brasseur R."/>
            <person name="Ruysschaert J.M."/>
            <person name="Cornelis G."/>
        </authorList>
    </citation>
    <scope>NUCLEOTIDE SEQUENCE [GENOMIC DNA]</scope>
    <source>
        <strain>439-80 / Serotype O:9</strain>
    </source>
</reference>
<keyword id="KW-0002">3D-structure</keyword>
<keyword id="KW-0614">Plasmid</keyword>
<keyword id="KW-0964">Secreted</keyword>
<keyword id="KW-0732">Signal</keyword>
<keyword id="KW-0843">Virulence</keyword>
<organism>
    <name type="scientific">Yersinia enterocolitica</name>
    <dbReference type="NCBI Taxonomy" id="630"/>
    <lineage>
        <taxon>Bacteria</taxon>
        <taxon>Pseudomonadati</taxon>
        <taxon>Pseudomonadota</taxon>
        <taxon>Gammaproteobacteria</taxon>
        <taxon>Enterobacterales</taxon>
        <taxon>Yersiniaceae</taxon>
        <taxon>Yersinia</taxon>
    </lineage>
</organism>
<dbReference type="EMBL" id="X52753">
    <property type="protein sequence ID" value="CAA36964.1"/>
    <property type="molecule type" value="Genomic_DNA"/>
</dbReference>
<dbReference type="PIR" id="S14240">
    <property type="entry name" value="S14240"/>
</dbReference>
<dbReference type="RefSeq" id="WP_010891202.1">
    <property type="nucleotide sequence ID" value="NZ_KN150737.1"/>
</dbReference>
<dbReference type="PDB" id="8BRF">
    <property type="method" value="X-ray"/>
    <property type="resolution" value="2.74 A"/>
    <property type="chains" value="AAA/BBB=1-182"/>
</dbReference>
<dbReference type="PDBsum" id="8BRF"/>
<dbReference type="SMR" id="P27474"/>
<dbReference type="KEGG" id="yet:CH48_4235"/>
<dbReference type="GO" id="GO:0005576">
    <property type="term" value="C:extracellular region"/>
    <property type="evidence" value="ECO:0007669"/>
    <property type="project" value="UniProtKB-SubCell"/>
</dbReference>
<dbReference type="InterPro" id="IPR016505">
    <property type="entry name" value="YopQ"/>
</dbReference>
<dbReference type="PIRSF" id="PIRSF007043">
    <property type="entry name" value="T3SS_YopQ"/>
    <property type="match status" value="1"/>
</dbReference>
<feature type="signal peptide" evidence="1">
    <location>
        <begin position="1"/>
        <end position="24"/>
    </location>
</feature>
<feature type="chain" id="PRO_0000022713" description="Protein YopQ">
    <location>
        <begin position="25"/>
        <end position="182"/>
    </location>
</feature>